<organism>
    <name type="scientific">Nanoarchaeum equitans (strain Kin4-M)</name>
    <dbReference type="NCBI Taxonomy" id="228908"/>
    <lineage>
        <taxon>Archaea</taxon>
        <taxon>Nanobdellota</taxon>
        <taxon>Candidatus Nanoarchaeia</taxon>
        <taxon>Nanoarchaeales</taxon>
        <taxon>Nanoarchaeaceae</taxon>
        <taxon>Nanoarchaeum</taxon>
    </lineage>
</organism>
<protein>
    <recommendedName>
        <fullName evidence="1">Large ribosomal subunit protein eL21</fullName>
    </recommendedName>
    <alternativeName>
        <fullName evidence="3">50S ribosomal protein L21e</fullName>
    </alternativeName>
</protein>
<feature type="chain" id="PRO_0000149694" description="Large ribosomal subunit protein eL21">
    <location>
        <begin position="1"/>
        <end position="98"/>
    </location>
</feature>
<feature type="region of interest" description="Disordered" evidence="2">
    <location>
        <begin position="1"/>
        <end position="23"/>
    </location>
</feature>
<feature type="compositionally biased region" description="Basic residues" evidence="2">
    <location>
        <begin position="7"/>
        <end position="23"/>
    </location>
</feature>
<gene>
    <name evidence="1" type="primary">rpl21e</name>
    <name type="ordered locus">NEQ397</name>
</gene>
<keyword id="KW-1185">Reference proteome</keyword>
<keyword id="KW-0687">Ribonucleoprotein</keyword>
<keyword id="KW-0689">Ribosomal protein</keyword>
<evidence type="ECO:0000255" key="1">
    <source>
        <dbReference type="HAMAP-Rule" id="MF_00369"/>
    </source>
</evidence>
<evidence type="ECO:0000256" key="2">
    <source>
        <dbReference type="SAM" id="MobiDB-lite"/>
    </source>
</evidence>
<evidence type="ECO:0000305" key="3"/>
<comment type="similarity">
    <text evidence="1">Belongs to the eukaryotic ribosomal protein eL21 family.</text>
</comment>
<comment type="sequence caution" evidence="3">
    <conflict type="erroneous initiation">
        <sequence resource="EMBL-CDS" id="AAR39243"/>
    </conflict>
</comment>
<sequence length="98" mass="11353">MVDRKGKGFRRKTRDKLSKHPRQRGKLTITRILQKFNNNDKVAIVIEPSWHYGMPHPRYHGLVGTVVGKRGNCYEVELEFNGEKKLLIVHPAHLKKVG</sequence>
<dbReference type="EMBL" id="AE017199">
    <property type="protein sequence ID" value="AAR39243.1"/>
    <property type="status" value="ALT_INIT"/>
    <property type="molecule type" value="Genomic_DNA"/>
</dbReference>
<dbReference type="SMR" id="Q74N21"/>
<dbReference type="STRING" id="228908.NEQ397"/>
<dbReference type="EnsemblBacteria" id="AAR39243">
    <property type="protein sequence ID" value="AAR39243"/>
    <property type="gene ID" value="NEQ397"/>
</dbReference>
<dbReference type="KEGG" id="neq:NEQ397"/>
<dbReference type="HOGENOM" id="CLU_1567189_0_0_2"/>
<dbReference type="Proteomes" id="UP000000578">
    <property type="component" value="Chromosome"/>
</dbReference>
<dbReference type="GO" id="GO:1990904">
    <property type="term" value="C:ribonucleoprotein complex"/>
    <property type="evidence" value="ECO:0007669"/>
    <property type="project" value="UniProtKB-KW"/>
</dbReference>
<dbReference type="GO" id="GO:0005840">
    <property type="term" value="C:ribosome"/>
    <property type="evidence" value="ECO:0007669"/>
    <property type="project" value="UniProtKB-KW"/>
</dbReference>
<dbReference type="GO" id="GO:0003735">
    <property type="term" value="F:structural constituent of ribosome"/>
    <property type="evidence" value="ECO:0007669"/>
    <property type="project" value="InterPro"/>
</dbReference>
<dbReference type="GO" id="GO:0006412">
    <property type="term" value="P:translation"/>
    <property type="evidence" value="ECO:0007669"/>
    <property type="project" value="UniProtKB-UniRule"/>
</dbReference>
<dbReference type="FunFam" id="2.30.30.70:FF:000001">
    <property type="entry name" value="60S ribosomal protein L21"/>
    <property type="match status" value="1"/>
</dbReference>
<dbReference type="Gene3D" id="2.30.30.70">
    <property type="entry name" value="Ribosomal protein L21"/>
    <property type="match status" value="1"/>
</dbReference>
<dbReference type="HAMAP" id="MF_00369">
    <property type="entry name" value="Ribosomal_eL21"/>
    <property type="match status" value="1"/>
</dbReference>
<dbReference type="InterPro" id="IPR001147">
    <property type="entry name" value="Ribosomal_eL21"/>
</dbReference>
<dbReference type="InterPro" id="IPR022856">
    <property type="entry name" value="Ribosomal_eL21_arc"/>
</dbReference>
<dbReference type="InterPro" id="IPR018259">
    <property type="entry name" value="Ribosomal_eL21_CS"/>
</dbReference>
<dbReference type="InterPro" id="IPR036948">
    <property type="entry name" value="Ribosomal_eL21_sf"/>
</dbReference>
<dbReference type="InterPro" id="IPR008991">
    <property type="entry name" value="Translation_prot_SH3-like_sf"/>
</dbReference>
<dbReference type="NCBIfam" id="NF003303">
    <property type="entry name" value="PRK04306.1"/>
    <property type="match status" value="1"/>
</dbReference>
<dbReference type="PANTHER" id="PTHR20981">
    <property type="entry name" value="60S RIBOSOMAL PROTEIN L21"/>
    <property type="match status" value="1"/>
</dbReference>
<dbReference type="Pfam" id="PF01157">
    <property type="entry name" value="Ribosomal_L21e"/>
    <property type="match status" value="1"/>
</dbReference>
<dbReference type="SUPFAM" id="SSF50104">
    <property type="entry name" value="Translation proteins SH3-like domain"/>
    <property type="match status" value="1"/>
</dbReference>
<dbReference type="PROSITE" id="PS01171">
    <property type="entry name" value="RIBOSOMAL_L21E"/>
    <property type="match status" value="1"/>
</dbReference>
<reference key="1">
    <citation type="journal article" date="2003" name="Proc. Natl. Acad. Sci. U.S.A.">
        <title>The genome of Nanoarchaeum equitans: insights into early archaeal evolution and derived parasitism.</title>
        <authorList>
            <person name="Waters E."/>
            <person name="Hohn M.J."/>
            <person name="Ahel I."/>
            <person name="Graham D.E."/>
            <person name="Adams M.D."/>
            <person name="Barnstead M."/>
            <person name="Beeson K.Y."/>
            <person name="Bibbs L."/>
            <person name="Bolanos R."/>
            <person name="Keller M."/>
            <person name="Kretz K."/>
            <person name="Lin X."/>
            <person name="Mathur E."/>
            <person name="Ni J."/>
            <person name="Podar M."/>
            <person name="Richardson T."/>
            <person name="Sutton G.G."/>
            <person name="Simon M."/>
            <person name="Soell D."/>
            <person name="Stetter K.O."/>
            <person name="Short J.M."/>
            <person name="Noorderwier M."/>
        </authorList>
    </citation>
    <scope>NUCLEOTIDE SEQUENCE [LARGE SCALE GENOMIC DNA]</scope>
    <source>
        <strain>Kin4-M</strain>
    </source>
</reference>
<accession>Q74N21</accession>
<proteinExistence type="inferred from homology"/>
<name>RL21_NANEQ</name>